<organism>
    <name type="scientific">Bifidobacterium longum (strain NCC 2705)</name>
    <dbReference type="NCBI Taxonomy" id="206672"/>
    <lineage>
        <taxon>Bacteria</taxon>
        <taxon>Bacillati</taxon>
        <taxon>Actinomycetota</taxon>
        <taxon>Actinomycetes</taxon>
        <taxon>Bifidobacteriales</taxon>
        <taxon>Bifidobacteriaceae</taxon>
        <taxon>Bifidobacterium</taxon>
    </lineage>
</organism>
<sequence>MVDIIDKALRMGEGHQLKKLENVAKAVNALEDEISALSDEDLKAQTPKFKQEIENGKSLDEIMPEAFATVREVSKRTLGQRHFDVQLMGGAALHWGNIAEMKTGEGKTLVATLPTYLNALEGRGVHVVTVNDYLASYQSELMGRIYRFLGMNVGCIITEQKPPERRKQYNADITYGTNNEFGFDYLRDNMAWEKADLVQRGHHYAIVDEVDSILIDEARTPLIISGPAEGDVTRWYRQFAKLVLKLTRDEDYDVDEKKKVVGILDPGITKVEDFLGIDNLYEPANTALIGYLNNAIKAKELFLRDKDYVVTQGEVLIVDEHTGRILPGRRYNEGLHQAIEAKEGVEVKAENQTFATITLQNYFRMYDKLAGMTGTAETEAAEFMNTYKLGVLPIKTNKPMIRKDQDDLIYRTKKEKLAAIVKDVAKRHAKGQPVLLGTASVESSEVVSTLLDVAKIPHQVLNAKQHEKEAAVVAVAGRKGAVTVATNMAGRGTDIMLGGNVEFLADAKLKSEGYSPEDTPEEYEKRWPGTLNEIKAQVKDEHEEVKELGGLYVLGTERHESRRIDNQLRGRSGRQGDPGESRFYLSLEDDLMRLFNTQLVAQVMAKGMEEGQPIEAKSVTKGVRTAQKAVESRNYEIRKNVLKYDDVMNKQRTVIYSERQAVLKGEDIHKDILRFISDTVESYIKGANKGSEKPKDWDWEGLFKALNTVIPTKVDEDEVRKIVGGLKGAKAVEAVRDLIVEDARQQYGEMEETIGETGLRDLERRVVLAVLDRKWREHLYEMDYLKDGIGLRGMGQRDPLVEYQREGYQMYNSMIEAIKEETVQLLFHIDIKQVATTDEAVDEVEETAESADTIAVASGPDENGESVVEAAEGEVEEEDEDTDAKQAIAESAAASGAGESTLPVAGPAPISHAEGKVPVSKRPKSEELKTPWADGRTFPGTGKNAPCPCGSGRKYKMCHGQNEK</sequence>
<protein>
    <recommendedName>
        <fullName evidence="1">Protein translocase subunit SecA</fullName>
        <ecNumber evidence="1">7.4.2.8</ecNumber>
    </recommendedName>
</protein>
<keyword id="KW-0067">ATP-binding</keyword>
<keyword id="KW-1003">Cell membrane</keyword>
<keyword id="KW-0963">Cytoplasm</keyword>
<keyword id="KW-0472">Membrane</keyword>
<keyword id="KW-0479">Metal-binding</keyword>
<keyword id="KW-0547">Nucleotide-binding</keyword>
<keyword id="KW-0653">Protein transport</keyword>
<keyword id="KW-1185">Reference proteome</keyword>
<keyword id="KW-1278">Translocase</keyword>
<keyword id="KW-0811">Translocation</keyword>
<keyword id="KW-0813">Transport</keyword>
<keyword id="KW-0862">Zinc</keyword>
<gene>
    <name evidence="1" type="primary">secA</name>
    <name type="ordered locus">BL1419</name>
</gene>
<name>SECA_BIFLO</name>
<dbReference type="EC" id="7.4.2.8" evidence="1"/>
<dbReference type="EMBL" id="AE014295">
    <property type="protein sequence ID" value="AAN25218.1"/>
    <property type="molecule type" value="Genomic_DNA"/>
</dbReference>
<dbReference type="RefSeq" id="NP_696582.1">
    <property type="nucleotide sequence ID" value="NC_004307.2"/>
</dbReference>
<dbReference type="RefSeq" id="WP_011068038.1">
    <property type="nucleotide sequence ID" value="NC_004307.2"/>
</dbReference>
<dbReference type="SMR" id="Q8G4G5"/>
<dbReference type="STRING" id="206672.BL1419"/>
<dbReference type="EnsemblBacteria" id="AAN25218">
    <property type="protein sequence ID" value="AAN25218"/>
    <property type="gene ID" value="BL1419"/>
</dbReference>
<dbReference type="KEGG" id="blo:BL1419"/>
<dbReference type="PATRIC" id="fig|206672.9.peg.277"/>
<dbReference type="HOGENOM" id="CLU_005314_3_0_11"/>
<dbReference type="OrthoDB" id="9805579at2"/>
<dbReference type="PhylomeDB" id="Q8G4G5"/>
<dbReference type="Proteomes" id="UP000000439">
    <property type="component" value="Chromosome"/>
</dbReference>
<dbReference type="GO" id="GO:0031522">
    <property type="term" value="C:cell envelope Sec protein transport complex"/>
    <property type="evidence" value="ECO:0007669"/>
    <property type="project" value="TreeGrafter"/>
</dbReference>
<dbReference type="GO" id="GO:0005829">
    <property type="term" value="C:cytosol"/>
    <property type="evidence" value="ECO:0007669"/>
    <property type="project" value="TreeGrafter"/>
</dbReference>
<dbReference type="GO" id="GO:0005886">
    <property type="term" value="C:plasma membrane"/>
    <property type="evidence" value="ECO:0007669"/>
    <property type="project" value="UniProtKB-SubCell"/>
</dbReference>
<dbReference type="GO" id="GO:0005524">
    <property type="term" value="F:ATP binding"/>
    <property type="evidence" value="ECO:0007669"/>
    <property type="project" value="UniProtKB-UniRule"/>
</dbReference>
<dbReference type="GO" id="GO:0046872">
    <property type="term" value="F:metal ion binding"/>
    <property type="evidence" value="ECO:0007669"/>
    <property type="project" value="UniProtKB-KW"/>
</dbReference>
<dbReference type="GO" id="GO:0008564">
    <property type="term" value="F:protein-exporting ATPase activity"/>
    <property type="evidence" value="ECO:0007669"/>
    <property type="project" value="UniProtKB-EC"/>
</dbReference>
<dbReference type="GO" id="GO:0065002">
    <property type="term" value="P:intracellular protein transmembrane transport"/>
    <property type="evidence" value="ECO:0007669"/>
    <property type="project" value="UniProtKB-UniRule"/>
</dbReference>
<dbReference type="GO" id="GO:0017038">
    <property type="term" value="P:protein import"/>
    <property type="evidence" value="ECO:0007669"/>
    <property type="project" value="InterPro"/>
</dbReference>
<dbReference type="GO" id="GO:0006605">
    <property type="term" value="P:protein targeting"/>
    <property type="evidence" value="ECO:0007669"/>
    <property type="project" value="UniProtKB-UniRule"/>
</dbReference>
<dbReference type="GO" id="GO:0043952">
    <property type="term" value="P:protein transport by the Sec complex"/>
    <property type="evidence" value="ECO:0007669"/>
    <property type="project" value="TreeGrafter"/>
</dbReference>
<dbReference type="CDD" id="cd17928">
    <property type="entry name" value="DEXDc_SecA"/>
    <property type="match status" value="1"/>
</dbReference>
<dbReference type="CDD" id="cd18803">
    <property type="entry name" value="SF2_C_secA"/>
    <property type="match status" value="1"/>
</dbReference>
<dbReference type="FunFam" id="3.40.50.300:FF:000113">
    <property type="entry name" value="Preprotein translocase subunit SecA"/>
    <property type="match status" value="1"/>
</dbReference>
<dbReference type="FunFam" id="3.40.50.300:FF:000334">
    <property type="entry name" value="Protein translocase subunit SecA"/>
    <property type="match status" value="1"/>
</dbReference>
<dbReference type="FunFam" id="3.90.1440.10:FF:000002">
    <property type="entry name" value="Protein translocase subunit SecA"/>
    <property type="match status" value="1"/>
</dbReference>
<dbReference type="Gene3D" id="3.10.450.50">
    <property type="match status" value="1"/>
</dbReference>
<dbReference type="Gene3D" id="1.10.3060.10">
    <property type="entry name" value="Helical scaffold and wing domains of SecA"/>
    <property type="match status" value="1"/>
</dbReference>
<dbReference type="Gene3D" id="3.40.50.300">
    <property type="entry name" value="P-loop containing nucleotide triphosphate hydrolases"/>
    <property type="match status" value="2"/>
</dbReference>
<dbReference type="Gene3D" id="3.90.1440.10">
    <property type="entry name" value="SecA, preprotein cross-linking domain"/>
    <property type="match status" value="1"/>
</dbReference>
<dbReference type="HAMAP" id="MF_01382">
    <property type="entry name" value="SecA"/>
    <property type="match status" value="1"/>
</dbReference>
<dbReference type="InterPro" id="IPR014001">
    <property type="entry name" value="Helicase_ATP-bd"/>
</dbReference>
<dbReference type="InterPro" id="IPR001650">
    <property type="entry name" value="Helicase_C-like"/>
</dbReference>
<dbReference type="InterPro" id="IPR027417">
    <property type="entry name" value="P-loop_NTPase"/>
</dbReference>
<dbReference type="InterPro" id="IPR004027">
    <property type="entry name" value="SEC_C_motif"/>
</dbReference>
<dbReference type="InterPro" id="IPR000185">
    <property type="entry name" value="SecA"/>
</dbReference>
<dbReference type="InterPro" id="IPR020937">
    <property type="entry name" value="SecA_CS"/>
</dbReference>
<dbReference type="InterPro" id="IPR011115">
    <property type="entry name" value="SecA_DEAD"/>
</dbReference>
<dbReference type="InterPro" id="IPR014018">
    <property type="entry name" value="SecA_motor_DEAD"/>
</dbReference>
<dbReference type="InterPro" id="IPR011130">
    <property type="entry name" value="SecA_preprotein_X-link_dom"/>
</dbReference>
<dbReference type="InterPro" id="IPR044722">
    <property type="entry name" value="SecA_SF2_C"/>
</dbReference>
<dbReference type="InterPro" id="IPR011116">
    <property type="entry name" value="SecA_Wing/Scaffold"/>
</dbReference>
<dbReference type="InterPro" id="IPR036266">
    <property type="entry name" value="SecA_Wing/Scaffold_sf"/>
</dbReference>
<dbReference type="InterPro" id="IPR036670">
    <property type="entry name" value="SecA_X-link_sf"/>
</dbReference>
<dbReference type="NCBIfam" id="NF009538">
    <property type="entry name" value="PRK12904.1"/>
    <property type="match status" value="1"/>
</dbReference>
<dbReference type="NCBIfam" id="TIGR00963">
    <property type="entry name" value="secA"/>
    <property type="match status" value="1"/>
</dbReference>
<dbReference type="PANTHER" id="PTHR30612:SF0">
    <property type="entry name" value="CHLOROPLAST PROTEIN-TRANSPORTING ATPASE"/>
    <property type="match status" value="1"/>
</dbReference>
<dbReference type="PANTHER" id="PTHR30612">
    <property type="entry name" value="SECA INNER MEMBRANE COMPONENT OF SEC PROTEIN SECRETION SYSTEM"/>
    <property type="match status" value="1"/>
</dbReference>
<dbReference type="Pfam" id="PF21090">
    <property type="entry name" value="P-loop_SecA"/>
    <property type="match status" value="1"/>
</dbReference>
<dbReference type="Pfam" id="PF02810">
    <property type="entry name" value="SEC-C"/>
    <property type="match status" value="1"/>
</dbReference>
<dbReference type="Pfam" id="PF07517">
    <property type="entry name" value="SecA_DEAD"/>
    <property type="match status" value="1"/>
</dbReference>
<dbReference type="Pfam" id="PF01043">
    <property type="entry name" value="SecA_PP_bind"/>
    <property type="match status" value="1"/>
</dbReference>
<dbReference type="Pfam" id="PF07516">
    <property type="entry name" value="SecA_SW"/>
    <property type="match status" value="1"/>
</dbReference>
<dbReference type="PRINTS" id="PR00906">
    <property type="entry name" value="SECA"/>
</dbReference>
<dbReference type="SMART" id="SM00957">
    <property type="entry name" value="SecA_DEAD"/>
    <property type="match status" value="1"/>
</dbReference>
<dbReference type="SMART" id="SM00958">
    <property type="entry name" value="SecA_PP_bind"/>
    <property type="match status" value="1"/>
</dbReference>
<dbReference type="SUPFAM" id="SSF81886">
    <property type="entry name" value="Helical scaffold and wing domains of SecA"/>
    <property type="match status" value="1"/>
</dbReference>
<dbReference type="SUPFAM" id="SSF52540">
    <property type="entry name" value="P-loop containing nucleoside triphosphate hydrolases"/>
    <property type="match status" value="2"/>
</dbReference>
<dbReference type="SUPFAM" id="SSF81767">
    <property type="entry name" value="Pre-protein crosslinking domain of SecA"/>
    <property type="match status" value="1"/>
</dbReference>
<dbReference type="PROSITE" id="PS01312">
    <property type="entry name" value="SECA"/>
    <property type="match status" value="1"/>
</dbReference>
<dbReference type="PROSITE" id="PS51196">
    <property type="entry name" value="SECA_MOTOR_DEAD"/>
    <property type="match status" value="1"/>
</dbReference>
<comment type="function">
    <text evidence="1">Part of the Sec protein translocase complex. Interacts with the SecYEG preprotein conducting channel. Has a central role in coupling the hydrolysis of ATP to the transfer of proteins into and across the cell membrane, serving as an ATP-driven molecular motor driving the stepwise translocation of polypeptide chains across the membrane.</text>
</comment>
<comment type="catalytic activity">
    <reaction evidence="1">
        <text>ATP + H2O + cellular proteinSide 1 = ADP + phosphate + cellular proteinSide 2.</text>
        <dbReference type="EC" id="7.4.2.8"/>
    </reaction>
</comment>
<comment type="cofactor">
    <cofactor evidence="1">
        <name>Zn(2+)</name>
        <dbReference type="ChEBI" id="CHEBI:29105"/>
    </cofactor>
    <text evidence="1">May bind 1 zinc ion per subunit.</text>
</comment>
<comment type="subunit">
    <text evidence="1">Monomer and homodimer. Part of the essential Sec protein translocation apparatus which comprises SecA, SecYEG and auxiliary proteins SecDF. Other proteins may also be involved.</text>
</comment>
<comment type="subcellular location">
    <subcellularLocation>
        <location evidence="1">Cell membrane</location>
        <topology evidence="1">Peripheral membrane protein</topology>
        <orientation evidence="1">Cytoplasmic side</orientation>
    </subcellularLocation>
    <subcellularLocation>
        <location evidence="1">Cytoplasm</location>
    </subcellularLocation>
    <text evidence="1">Distribution is 50-50.</text>
</comment>
<comment type="similarity">
    <text evidence="1">Belongs to the SecA family.</text>
</comment>
<feature type="chain" id="PRO_0000318326" description="Protein translocase subunit SecA">
    <location>
        <begin position="1"/>
        <end position="964"/>
    </location>
</feature>
<feature type="region of interest" description="Disordered" evidence="2">
    <location>
        <begin position="848"/>
        <end position="964"/>
    </location>
</feature>
<feature type="compositionally biased region" description="Acidic residues" evidence="2">
    <location>
        <begin position="871"/>
        <end position="882"/>
    </location>
</feature>
<feature type="compositionally biased region" description="Low complexity" evidence="2">
    <location>
        <begin position="889"/>
        <end position="900"/>
    </location>
</feature>
<feature type="binding site" evidence="1">
    <location>
        <position position="86"/>
    </location>
    <ligand>
        <name>ATP</name>
        <dbReference type="ChEBI" id="CHEBI:30616"/>
    </ligand>
</feature>
<feature type="binding site" evidence="1">
    <location>
        <begin position="104"/>
        <end position="108"/>
    </location>
    <ligand>
        <name>ATP</name>
        <dbReference type="ChEBI" id="CHEBI:30616"/>
    </ligand>
</feature>
<feature type="binding site" evidence="1">
    <location>
        <position position="494"/>
    </location>
    <ligand>
        <name>ATP</name>
        <dbReference type="ChEBI" id="CHEBI:30616"/>
    </ligand>
</feature>
<feature type="binding site" evidence="1">
    <location>
        <position position="947"/>
    </location>
    <ligand>
        <name>Zn(2+)</name>
        <dbReference type="ChEBI" id="CHEBI:29105"/>
    </ligand>
</feature>
<feature type="binding site" evidence="1">
    <location>
        <position position="949"/>
    </location>
    <ligand>
        <name>Zn(2+)</name>
        <dbReference type="ChEBI" id="CHEBI:29105"/>
    </ligand>
</feature>
<feature type="binding site" evidence="1">
    <location>
        <position position="958"/>
    </location>
    <ligand>
        <name>Zn(2+)</name>
        <dbReference type="ChEBI" id="CHEBI:29105"/>
    </ligand>
</feature>
<feature type="binding site" evidence="1">
    <location>
        <position position="959"/>
    </location>
    <ligand>
        <name>Zn(2+)</name>
        <dbReference type="ChEBI" id="CHEBI:29105"/>
    </ligand>
</feature>
<evidence type="ECO:0000255" key="1">
    <source>
        <dbReference type="HAMAP-Rule" id="MF_01382"/>
    </source>
</evidence>
<evidence type="ECO:0000256" key="2">
    <source>
        <dbReference type="SAM" id="MobiDB-lite"/>
    </source>
</evidence>
<proteinExistence type="inferred from homology"/>
<accession>Q8G4G5</accession>
<reference key="1">
    <citation type="journal article" date="2002" name="Proc. Natl. Acad. Sci. U.S.A.">
        <title>The genome sequence of Bifidobacterium longum reflects its adaptation to the human gastrointestinal tract.</title>
        <authorList>
            <person name="Schell M.A."/>
            <person name="Karmirantzou M."/>
            <person name="Snel B."/>
            <person name="Vilanova D."/>
            <person name="Berger B."/>
            <person name="Pessi G."/>
            <person name="Zwahlen M.-C."/>
            <person name="Desiere F."/>
            <person name="Bork P."/>
            <person name="Delley M."/>
            <person name="Pridmore R.D."/>
            <person name="Arigoni F."/>
        </authorList>
    </citation>
    <scope>NUCLEOTIDE SEQUENCE [LARGE SCALE GENOMIC DNA]</scope>
    <source>
        <strain>NCC 2705</strain>
    </source>
</reference>